<feature type="chain" id="PRO_1000166686" description="UPF0391 membrane protein CCNA_00709">
    <location>
        <begin position="1"/>
        <end position="60"/>
    </location>
</feature>
<feature type="transmembrane region" description="Helical" evidence="1">
    <location>
        <begin position="4"/>
        <end position="24"/>
    </location>
</feature>
<feature type="transmembrane region" description="Helical" evidence="1">
    <location>
        <begin position="33"/>
        <end position="53"/>
    </location>
</feature>
<sequence length="60" mass="6003">MLKWAIILAIVALIAGALGFSGLAGAAAGVAKILFFLFLVGFVLVLLLGGTVFKAATGPK</sequence>
<proteinExistence type="inferred from homology"/>
<protein>
    <recommendedName>
        <fullName evidence="1">UPF0391 membrane protein CCNA_00709</fullName>
    </recommendedName>
</protein>
<accession>B8H0S5</accession>
<organism>
    <name type="scientific">Caulobacter vibrioides (strain NA1000 / CB15N)</name>
    <name type="common">Caulobacter crescentus</name>
    <dbReference type="NCBI Taxonomy" id="565050"/>
    <lineage>
        <taxon>Bacteria</taxon>
        <taxon>Pseudomonadati</taxon>
        <taxon>Pseudomonadota</taxon>
        <taxon>Alphaproteobacteria</taxon>
        <taxon>Caulobacterales</taxon>
        <taxon>Caulobacteraceae</taxon>
        <taxon>Caulobacter</taxon>
    </lineage>
</organism>
<keyword id="KW-1003">Cell membrane</keyword>
<keyword id="KW-0472">Membrane</keyword>
<keyword id="KW-1185">Reference proteome</keyword>
<keyword id="KW-0812">Transmembrane</keyword>
<keyword id="KW-1133">Transmembrane helix</keyword>
<dbReference type="EMBL" id="CP001340">
    <property type="protein sequence ID" value="ACL94174.1"/>
    <property type="molecule type" value="Genomic_DNA"/>
</dbReference>
<dbReference type="RefSeq" id="WP_010918559.1">
    <property type="nucleotide sequence ID" value="NC_011916.1"/>
</dbReference>
<dbReference type="RefSeq" id="YP_002516082.1">
    <property type="nucleotide sequence ID" value="NC_011916.1"/>
</dbReference>
<dbReference type="GeneID" id="7330518"/>
<dbReference type="KEGG" id="ccs:CCNA_00709"/>
<dbReference type="PATRIC" id="fig|565050.3.peg.700"/>
<dbReference type="HOGENOM" id="CLU_187346_1_0_5"/>
<dbReference type="Proteomes" id="UP000001364">
    <property type="component" value="Chromosome"/>
</dbReference>
<dbReference type="GO" id="GO:0005886">
    <property type="term" value="C:plasma membrane"/>
    <property type="evidence" value="ECO:0007669"/>
    <property type="project" value="UniProtKB-SubCell"/>
</dbReference>
<dbReference type="HAMAP" id="MF_01361">
    <property type="entry name" value="UPF0391"/>
    <property type="match status" value="1"/>
</dbReference>
<dbReference type="InterPro" id="IPR009760">
    <property type="entry name" value="DUF1328"/>
</dbReference>
<dbReference type="Pfam" id="PF07043">
    <property type="entry name" value="DUF1328"/>
    <property type="match status" value="1"/>
</dbReference>
<dbReference type="PIRSF" id="PIRSF036466">
    <property type="entry name" value="UCP036466"/>
    <property type="match status" value="1"/>
</dbReference>
<name>Y709_CAUVN</name>
<comment type="subcellular location">
    <subcellularLocation>
        <location evidence="1">Cell membrane</location>
        <topology evidence="1">Multi-pass membrane protein</topology>
    </subcellularLocation>
</comment>
<comment type="similarity">
    <text evidence="1">Belongs to the UPF0391 family.</text>
</comment>
<evidence type="ECO:0000255" key="1">
    <source>
        <dbReference type="HAMAP-Rule" id="MF_01361"/>
    </source>
</evidence>
<reference key="1">
    <citation type="journal article" date="2010" name="J. Bacteriol.">
        <title>The genetic basis of laboratory adaptation in Caulobacter crescentus.</title>
        <authorList>
            <person name="Marks M.E."/>
            <person name="Castro-Rojas C.M."/>
            <person name="Teiling C."/>
            <person name="Du L."/>
            <person name="Kapatral V."/>
            <person name="Walunas T.L."/>
            <person name="Crosson S."/>
        </authorList>
    </citation>
    <scope>NUCLEOTIDE SEQUENCE [LARGE SCALE GENOMIC DNA]</scope>
    <source>
        <strain>NA1000 / CB15N</strain>
    </source>
</reference>
<gene>
    <name type="ordered locus">CCNA_00709</name>
</gene>